<dbReference type="EC" id="4.3.2.10" evidence="1"/>
<dbReference type="EMBL" id="CP000941">
    <property type="protein sequence ID" value="ACA12337.1"/>
    <property type="molecule type" value="Genomic_DNA"/>
</dbReference>
<dbReference type="RefSeq" id="WP_004088319.1">
    <property type="nucleotide sequence ID" value="NC_010513.1"/>
</dbReference>
<dbReference type="SMR" id="B0U3A8"/>
<dbReference type="GeneID" id="93905073"/>
<dbReference type="KEGG" id="xfm:Xfasm12_1414"/>
<dbReference type="HOGENOM" id="CLU_048577_4_0_6"/>
<dbReference type="UniPathway" id="UPA00031">
    <property type="reaction ID" value="UER00010"/>
</dbReference>
<dbReference type="GO" id="GO:0005737">
    <property type="term" value="C:cytoplasm"/>
    <property type="evidence" value="ECO:0007669"/>
    <property type="project" value="UniProtKB-SubCell"/>
</dbReference>
<dbReference type="GO" id="GO:0000107">
    <property type="term" value="F:imidazoleglycerol-phosphate synthase activity"/>
    <property type="evidence" value="ECO:0007669"/>
    <property type="project" value="UniProtKB-UniRule"/>
</dbReference>
<dbReference type="GO" id="GO:0016829">
    <property type="term" value="F:lyase activity"/>
    <property type="evidence" value="ECO:0007669"/>
    <property type="project" value="UniProtKB-KW"/>
</dbReference>
<dbReference type="GO" id="GO:0000105">
    <property type="term" value="P:L-histidine biosynthetic process"/>
    <property type="evidence" value="ECO:0007669"/>
    <property type="project" value="UniProtKB-UniRule"/>
</dbReference>
<dbReference type="CDD" id="cd04731">
    <property type="entry name" value="HisF"/>
    <property type="match status" value="1"/>
</dbReference>
<dbReference type="FunFam" id="3.20.20.70:FF:000006">
    <property type="entry name" value="Imidazole glycerol phosphate synthase subunit HisF"/>
    <property type="match status" value="1"/>
</dbReference>
<dbReference type="Gene3D" id="3.20.20.70">
    <property type="entry name" value="Aldolase class I"/>
    <property type="match status" value="1"/>
</dbReference>
<dbReference type="HAMAP" id="MF_01013">
    <property type="entry name" value="HisF"/>
    <property type="match status" value="1"/>
</dbReference>
<dbReference type="InterPro" id="IPR013785">
    <property type="entry name" value="Aldolase_TIM"/>
</dbReference>
<dbReference type="InterPro" id="IPR006062">
    <property type="entry name" value="His_biosynth"/>
</dbReference>
<dbReference type="InterPro" id="IPR004651">
    <property type="entry name" value="HisF"/>
</dbReference>
<dbReference type="InterPro" id="IPR050064">
    <property type="entry name" value="IGPS_HisA/HisF"/>
</dbReference>
<dbReference type="InterPro" id="IPR011060">
    <property type="entry name" value="RibuloseP-bd_barrel"/>
</dbReference>
<dbReference type="NCBIfam" id="TIGR00735">
    <property type="entry name" value="hisF"/>
    <property type="match status" value="1"/>
</dbReference>
<dbReference type="PANTHER" id="PTHR21235:SF2">
    <property type="entry name" value="IMIDAZOLE GLYCEROL PHOSPHATE SYNTHASE HISHF"/>
    <property type="match status" value="1"/>
</dbReference>
<dbReference type="PANTHER" id="PTHR21235">
    <property type="entry name" value="IMIDAZOLE GLYCEROL PHOSPHATE SYNTHASE SUBUNIT HISF/H IGP SYNTHASE SUBUNIT HISF/H"/>
    <property type="match status" value="1"/>
</dbReference>
<dbReference type="Pfam" id="PF00977">
    <property type="entry name" value="His_biosynth"/>
    <property type="match status" value="1"/>
</dbReference>
<dbReference type="SUPFAM" id="SSF51366">
    <property type="entry name" value="Ribulose-phoshate binding barrel"/>
    <property type="match status" value="1"/>
</dbReference>
<comment type="function">
    <text evidence="1">IGPS catalyzes the conversion of PRFAR and glutamine to IGP, AICAR and glutamate. The HisF subunit catalyzes the cyclization activity that produces IGP and AICAR from PRFAR using the ammonia provided by the HisH subunit.</text>
</comment>
<comment type="catalytic activity">
    <reaction evidence="1">
        <text>5-[(5-phospho-1-deoxy-D-ribulos-1-ylimino)methylamino]-1-(5-phospho-beta-D-ribosyl)imidazole-4-carboxamide + L-glutamine = D-erythro-1-(imidazol-4-yl)glycerol 3-phosphate + 5-amino-1-(5-phospho-beta-D-ribosyl)imidazole-4-carboxamide + L-glutamate + H(+)</text>
        <dbReference type="Rhea" id="RHEA:24793"/>
        <dbReference type="ChEBI" id="CHEBI:15378"/>
        <dbReference type="ChEBI" id="CHEBI:29985"/>
        <dbReference type="ChEBI" id="CHEBI:58278"/>
        <dbReference type="ChEBI" id="CHEBI:58359"/>
        <dbReference type="ChEBI" id="CHEBI:58475"/>
        <dbReference type="ChEBI" id="CHEBI:58525"/>
        <dbReference type="EC" id="4.3.2.10"/>
    </reaction>
</comment>
<comment type="pathway">
    <text evidence="1">Amino-acid biosynthesis; L-histidine biosynthesis; L-histidine from 5-phospho-alpha-D-ribose 1-diphosphate: step 5/9.</text>
</comment>
<comment type="subunit">
    <text evidence="1">Heterodimer of HisH and HisF.</text>
</comment>
<comment type="subcellular location">
    <subcellularLocation>
        <location evidence="1">Cytoplasm</location>
    </subcellularLocation>
</comment>
<comment type="similarity">
    <text evidence="1">Belongs to the HisA/HisF family.</text>
</comment>
<feature type="chain" id="PRO_1000135062" description="Imidazole glycerol phosphate synthase subunit HisF">
    <location>
        <begin position="1"/>
        <end position="257"/>
    </location>
</feature>
<feature type="active site" evidence="1">
    <location>
        <position position="11"/>
    </location>
</feature>
<feature type="active site" evidence="1">
    <location>
        <position position="130"/>
    </location>
</feature>
<organism>
    <name type="scientific">Xylella fastidiosa (strain M12)</name>
    <dbReference type="NCBI Taxonomy" id="405440"/>
    <lineage>
        <taxon>Bacteria</taxon>
        <taxon>Pseudomonadati</taxon>
        <taxon>Pseudomonadota</taxon>
        <taxon>Gammaproteobacteria</taxon>
        <taxon>Lysobacterales</taxon>
        <taxon>Lysobacteraceae</taxon>
        <taxon>Xylella</taxon>
    </lineage>
</organism>
<protein>
    <recommendedName>
        <fullName evidence="1">Imidazole glycerol phosphate synthase subunit HisF</fullName>
        <ecNumber evidence="1">4.3.2.10</ecNumber>
    </recommendedName>
    <alternativeName>
        <fullName evidence="1">IGP synthase cyclase subunit</fullName>
    </alternativeName>
    <alternativeName>
        <fullName evidence="1">IGP synthase subunit HisF</fullName>
    </alternativeName>
    <alternativeName>
        <fullName evidence="1">ImGP synthase subunit HisF</fullName>
        <shortName evidence="1">IGPS subunit HisF</shortName>
    </alternativeName>
</protein>
<keyword id="KW-0028">Amino-acid biosynthesis</keyword>
<keyword id="KW-0963">Cytoplasm</keyword>
<keyword id="KW-0368">Histidine biosynthesis</keyword>
<keyword id="KW-0456">Lyase</keyword>
<gene>
    <name evidence="1" type="primary">hisF</name>
    <name type="ordered locus">Xfasm12_1414</name>
</gene>
<accession>B0U3A8</accession>
<name>HIS6_XYLFM</name>
<evidence type="ECO:0000255" key="1">
    <source>
        <dbReference type="HAMAP-Rule" id="MF_01013"/>
    </source>
</evidence>
<proteinExistence type="inferred from homology"/>
<reference key="1">
    <citation type="journal article" date="2010" name="J. Bacteriol.">
        <title>Whole genome sequences of two Xylella fastidiosa strains (M12 and M23) causing almond leaf scorch disease in California.</title>
        <authorList>
            <person name="Chen J."/>
            <person name="Xie G."/>
            <person name="Han S."/>
            <person name="Chertkov O."/>
            <person name="Sims D."/>
            <person name="Civerolo E.L."/>
        </authorList>
    </citation>
    <scope>NUCLEOTIDE SEQUENCE [LARGE SCALE GENOMIC DNA]</scope>
    <source>
        <strain>M12</strain>
    </source>
</reference>
<sequence length="257" mass="27902">MLSRRIIPCLDVRDGRVVKGVKFRDHVDMGDIVELALRYRDHGADELVFYDIGASPQGRSVDYRWVERVARLIDIPFCVAGGIGEVETARAVLHAGADKISINSPALRQPALISALAEAFGVQCVVVGIDSIREADGQWRVRCNTGDPDKTQALPLRTLDWIVEAQRLGAGEIVLNCMDSDGVRCGYDIAQLSQARALCQVPLVASGGAGDMQHFADVFHKADVDGALAASVFHSGAISIPGLKQFLREQQIEVRDV</sequence>